<organism>
    <name type="scientific">Sus scrofa</name>
    <name type="common">Pig</name>
    <dbReference type="NCBI Taxonomy" id="9823"/>
    <lineage>
        <taxon>Eukaryota</taxon>
        <taxon>Metazoa</taxon>
        <taxon>Chordata</taxon>
        <taxon>Craniata</taxon>
        <taxon>Vertebrata</taxon>
        <taxon>Euteleostomi</taxon>
        <taxon>Mammalia</taxon>
        <taxon>Eutheria</taxon>
        <taxon>Laurasiatheria</taxon>
        <taxon>Artiodactyla</taxon>
        <taxon>Suina</taxon>
        <taxon>Suidae</taxon>
        <taxon>Sus</taxon>
    </lineage>
</organism>
<evidence type="ECO:0000250" key="1">
    <source>
        <dbReference type="UniProtKB" id="Q62522"/>
    </source>
</evidence>
<evidence type="ECO:0000250" key="2">
    <source>
        <dbReference type="UniProtKB" id="Q9BS86"/>
    </source>
</evidence>
<evidence type="ECO:0000255" key="3"/>
<evidence type="ECO:0000269" key="4">
    <source>
    </source>
</evidence>
<evidence type="ECO:0000303" key="5">
    <source>
    </source>
</evidence>
<evidence type="ECO:0000305" key="6"/>
<protein>
    <recommendedName>
        <fullName>Zona pellucida-binding protein 1</fullName>
    </recommendedName>
    <alternativeName>
        <fullName evidence="1">Inner acrosomal membrane IAM38</fullName>
    </alternativeName>
    <alternativeName>
        <fullName>Sp38</fullName>
    </alternativeName>
</protein>
<feature type="signal peptide" evidence="3">
    <location>
        <begin position="1"/>
        <end position="38"/>
    </location>
</feature>
<feature type="chain" id="PRO_0000041600" description="Zona pellucida-binding protein 1">
    <location>
        <begin position="39"/>
        <end position="350"/>
    </location>
</feature>
<feature type="glycosylation site" description="N-linked (GlcNAc...) asparagine" evidence="3">
    <location>
        <position position="113"/>
    </location>
</feature>
<feature type="glycosylation site" description="N-linked (GlcNAc...) asparagine" evidence="3">
    <location>
        <position position="186"/>
    </location>
</feature>
<feature type="glycosylation site" description="N-linked (GlcNAc...) asparagine" evidence="3">
    <location>
        <position position="339"/>
    </location>
</feature>
<dbReference type="EMBL" id="D17572">
    <property type="protein sequence ID" value="BAA04497.1"/>
    <property type="molecule type" value="mRNA"/>
</dbReference>
<dbReference type="RefSeq" id="NP_999271.1">
    <property type="nucleotide sequence ID" value="NM_214106.1"/>
</dbReference>
<dbReference type="FunCoup" id="Q29108">
    <property type="interactions" value="246"/>
</dbReference>
<dbReference type="STRING" id="9823.ENSSSCP00000016566"/>
<dbReference type="GlyCosmos" id="Q29108">
    <property type="glycosylation" value="3 sites, No reported glycans"/>
</dbReference>
<dbReference type="GlyGen" id="Q29108">
    <property type="glycosylation" value="3 sites"/>
</dbReference>
<dbReference type="PaxDb" id="9823-ENSSSCP00000016566"/>
<dbReference type="PeptideAtlas" id="Q29108"/>
<dbReference type="GeneID" id="397194"/>
<dbReference type="KEGG" id="ssc:397194"/>
<dbReference type="CTD" id="11055"/>
<dbReference type="eggNOG" id="ENOG502RJ20">
    <property type="taxonomic scope" value="Eukaryota"/>
</dbReference>
<dbReference type="InParanoid" id="Q29108"/>
<dbReference type="OrthoDB" id="9045220at2759"/>
<dbReference type="Proteomes" id="UP000008227">
    <property type="component" value="Unplaced"/>
</dbReference>
<dbReference type="Proteomes" id="UP000314985">
    <property type="component" value="Unplaced"/>
</dbReference>
<dbReference type="Proteomes" id="UP000694570">
    <property type="component" value="Unplaced"/>
</dbReference>
<dbReference type="Proteomes" id="UP000694571">
    <property type="component" value="Unplaced"/>
</dbReference>
<dbReference type="Proteomes" id="UP000694720">
    <property type="component" value="Unplaced"/>
</dbReference>
<dbReference type="Proteomes" id="UP000694722">
    <property type="component" value="Unplaced"/>
</dbReference>
<dbReference type="Proteomes" id="UP000694723">
    <property type="component" value="Unplaced"/>
</dbReference>
<dbReference type="Proteomes" id="UP000694724">
    <property type="component" value="Unplaced"/>
</dbReference>
<dbReference type="Proteomes" id="UP000694725">
    <property type="component" value="Unplaced"/>
</dbReference>
<dbReference type="Proteomes" id="UP000694726">
    <property type="component" value="Unplaced"/>
</dbReference>
<dbReference type="Proteomes" id="UP000694727">
    <property type="component" value="Unplaced"/>
</dbReference>
<dbReference type="Proteomes" id="UP000694728">
    <property type="component" value="Unplaced"/>
</dbReference>
<dbReference type="GO" id="GO:0002080">
    <property type="term" value="C:acrosomal membrane"/>
    <property type="evidence" value="ECO:0007669"/>
    <property type="project" value="UniProtKB-SubCell"/>
</dbReference>
<dbReference type="GO" id="GO:0001669">
    <property type="term" value="C:acrosomal vesicle"/>
    <property type="evidence" value="ECO:0000318"/>
    <property type="project" value="GO_Central"/>
</dbReference>
<dbReference type="GO" id="GO:0005576">
    <property type="term" value="C:extracellular region"/>
    <property type="evidence" value="ECO:0007669"/>
    <property type="project" value="UniProtKB-SubCell"/>
</dbReference>
<dbReference type="GO" id="GO:0002199">
    <property type="term" value="C:zona pellucida receptor complex"/>
    <property type="evidence" value="ECO:0000318"/>
    <property type="project" value="GO_Central"/>
</dbReference>
<dbReference type="GO" id="GO:0001675">
    <property type="term" value="P:acrosome assembly"/>
    <property type="evidence" value="ECO:0000318"/>
    <property type="project" value="GO_Central"/>
</dbReference>
<dbReference type="GO" id="GO:0007339">
    <property type="term" value="P:binding of sperm to zona pellucida"/>
    <property type="evidence" value="ECO:0000318"/>
    <property type="project" value="GO_Central"/>
</dbReference>
<dbReference type="Gene3D" id="2.60.40.10">
    <property type="entry name" value="Immunoglobulins"/>
    <property type="match status" value="1"/>
</dbReference>
<dbReference type="InterPro" id="IPR036179">
    <property type="entry name" value="Ig-like_dom_sf"/>
</dbReference>
<dbReference type="InterPro" id="IPR013783">
    <property type="entry name" value="Ig-like_fold"/>
</dbReference>
<dbReference type="InterPro" id="IPR010857">
    <property type="entry name" value="Sp38-bd"/>
</dbReference>
<dbReference type="InterPro" id="IPR048805">
    <property type="entry name" value="ZPBP1/2_C"/>
</dbReference>
<dbReference type="InterPro" id="IPR048806">
    <property type="entry name" value="ZPBP1/2_N"/>
</dbReference>
<dbReference type="PANTHER" id="PTHR15443">
    <property type="entry name" value="ZONA PELLUCIDA BINDING PROTEIN SP38"/>
    <property type="match status" value="1"/>
</dbReference>
<dbReference type="PANTHER" id="PTHR15443:SF5">
    <property type="entry name" value="ZONA PELLUCIDA-BINDING PROTEIN 1"/>
    <property type="match status" value="1"/>
</dbReference>
<dbReference type="Pfam" id="PF20626">
    <property type="entry name" value="EGF_Sp38_C"/>
    <property type="match status" value="1"/>
</dbReference>
<dbReference type="Pfam" id="PF07354">
    <property type="entry name" value="Sp38"/>
    <property type="match status" value="1"/>
</dbReference>
<dbReference type="SUPFAM" id="SSF48726">
    <property type="entry name" value="Immunoglobulin"/>
    <property type="match status" value="1"/>
</dbReference>
<gene>
    <name type="primary">ZPBP</name>
    <name type="synonym">ZPBP1</name>
</gene>
<reference key="1">
    <citation type="journal article" date="1995" name="Dev. Biol.">
        <title>Amino acid sequences of porcine Sp38 and proacrosin required for binding to the zona pellucida.</title>
        <authorList>
            <person name="Mori E."/>
            <person name="Kashiwabara S."/>
            <person name="Baba T."/>
            <person name="Inagaki Y."/>
            <person name="Mori T."/>
        </authorList>
    </citation>
    <scope>NUCLEOTIDE SEQUENCE [MRNA]</scope>
    <scope>TISSUE SPECIFICITY</scope>
    <scope>SUBCELLULAR LOCATION</scope>
    <source>
        <tissue>Testis</tissue>
    </source>
</reference>
<name>ZPBP1_PIG</name>
<keyword id="KW-0968">Cytoplasmic vesicle</keyword>
<keyword id="KW-0325">Glycoprotein</keyword>
<keyword id="KW-0472">Membrane</keyword>
<keyword id="KW-1185">Reference proteome</keyword>
<keyword id="KW-0964">Secreted</keyword>
<keyword id="KW-0732">Signal</keyword>
<proteinExistence type="evidence at transcript level"/>
<accession>Q29108</accession>
<comment type="function">
    <text evidence="1">Plays a role in acrosome compaction and sperm morphogenesis. Is implicated in sperm-oocyte interaction during fertilization.</text>
</comment>
<comment type="subcellular location">
    <subcellularLocation>
        <location evidence="2">Cytoplasmic vesicle</location>
        <location evidence="2">Secretory vesicle</location>
        <location evidence="2">Acrosome</location>
    </subcellularLocation>
    <subcellularLocation>
        <location evidence="6">Secreted</location>
    </subcellularLocation>
    <subcellularLocation>
        <location evidence="4">Cytoplasmic vesicle</location>
        <location evidence="4">Secretory vesicle</location>
        <location evidence="4">Acrosome membrane</location>
        <topology evidence="6">Peripheral membrane protein</topology>
    </subcellularLocation>
    <text evidence="1 5">First localized in acrosome granule, later migrates to the inner and outer acrosomal membrane. Released after the acrosomal reaction.</text>
</comment>
<comment type="tissue specificity">
    <text evidence="4">Expressed in testis. Detected in sperm cells.</text>
</comment>
<comment type="PTM">
    <text evidence="1">N-glycosylated.</text>
</comment>
<comment type="similarity">
    <text evidence="6">Belongs to the zona pellucida-binding protein Sp38 family.</text>
</comment>
<sequence>MEASAPDRARRGWRRARAAASPLSRAAVVLLLSALVLRAPPSVGYLDRLPRSFHLTQESAKIVGSPNFPVKVYVMLHQKSPHVLCVTQRLRNFELVDPSFQWHGPKGKIVSENSTAQVTSTGSLVFQNFEESMSGVYTCFLEYKPTVEEVVKNLQLKYIIYAYREPRYYYQFTARYHAAPCNSIYNISFEKKLLQILSKLVLDLSCEVSLLKSECHRVKMQRAGLQNELFFTFSVSSLDTEKGPKPCAGHSCESSKRLSKAKNLIERFFNQQVEVLGRRAEPLPEIYYIEGTLQMVWINRCFPGYGMNILKHPKCPECCVICSPGTYNSRDGIHCLQCNSSLVFGAKACL</sequence>